<gene>
    <name type="primary">ORP2B</name>
    <name type="ordered locus">At4g12460</name>
    <name type="ORF">T1P17.50</name>
</gene>
<reference key="1">
    <citation type="journal article" date="1999" name="Nature">
        <title>Sequence and analysis of chromosome 4 of the plant Arabidopsis thaliana.</title>
        <authorList>
            <person name="Mayer K.F.X."/>
            <person name="Schueller C."/>
            <person name="Wambutt R."/>
            <person name="Murphy G."/>
            <person name="Volckaert G."/>
            <person name="Pohl T."/>
            <person name="Duesterhoeft A."/>
            <person name="Stiekema W."/>
            <person name="Entian K.-D."/>
            <person name="Terryn N."/>
            <person name="Harris B."/>
            <person name="Ansorge W."/>
            <person name="Brandt P."/>
            <person name="Grivell L.A."/>
            <person name="Rieger M."/>
            <person name="Weichselgartner M."/>
            <person name="de Simone V."/>
            <person name="Obermaier B."/>
            <person name="Mache R."/>
            <person name="Mueller M."/>
            <person name="Kreis M."/>
            <person name="Delseny M."/>
            <person name="Puigdomenech P."/>
            <person name="Watson M."/>
            <person name="Schmidtheini T."/>
            <person name="Reichert B."/>
            <person name="Portetelle D."/>
            <person name="Perez-Alonso M."/>
            <person name="Boutry M."/>
            <person name="Bancroft I."/>
            <person name="Vos P."/>
            <person name="Hoheisel J."/>
            <person name="Zimmermann W."/>
            <person name="Wedler H."/>
            <person name="Ridley P."/>
            <person name="Langham S.-A."/>
            <person name="McCullagh B."/>
            <person name="Bilham L."/>
            <person name="Robben J."/>
            <person name="van der Schueren J."/>
            <person name="Grymonprez B."/>
            <person name="Chuang Y.-J."/>
            <person name="Vandenbussche F."/>
            <person name="Braeken M."/>
            <person name="Weltjens I."/>
            <person name="Voet M."/>
            <person name="Bastiaens I."/>
            <person name="Aert R."/>
            <person name="Defoor E."/>
            <person name="Weitzenegger T."/>
            <person name="Bothe G."/>
            <person name="Ramsperger U."/>
            <person name="Hilbert H."/>
            <person name="Braun M."/>
            <person name="Holzer E."/>
            <person name="Brandt A."/>
            <person name="Peters S."/>
            <person name="van Staveren M."/>
            <person name="Dirkse W."/>
            <person name="Mooijman P."/>
            <person name="Klein Lankhorst R."/>
            <person name="Rose M."/>
            <person name="Hauf J."/>
            <person name="Koetter P."/>
            <person name="Berneiser S."/>
            <person name="Hempel S."/>
            <person name="Feldpausch M."/>
            <person name="Lamberth S."/>
            <person name="Van den Daele H."/>
            <person name="De Keyser A."/>
            <person name="Buysshaert C."/>
            <person name="Gielen J."/>
            <person name="Villarroel R."/>
            <person name="De Clercq R."/>
            <person name="van Montagu M."/>
            <person name="Rogers J."/>
            <person name="Cronin A."/>
            <person name="Quail M.A."/>
            <person name="Bray-Allen S."/>
            <person name="Clark L."/>
            <person name="Doggett J."/>
            <person name="Hall S."/>
            <person name="Kay M."/>
            <person name="Lennard N."/>
            <person name="McLay K."/>
            <person name="Mayes R."/>
            <person name="Pettett A."/>
            <person name="Rajandream M.A."/>
            <person name="Lyne M."/>
            <person name="Benes V."/>
            <person name="Rechmann S."/>
            <person name="Borkova D."/>
            <person name="Bloecker H."/>
            <person name="Scharfe M."/>
            <person name="Grimm M."/>
            <person name="Loehnert T.-H."/>
            <person name="Dose S."/>
            <person name="de Haan M."/>
            <person name="Maarse A.C."/>
            <person name="Schaefer M."/>
            <person name="Mueller-Auer S."/>
            <person name="Gabel C."/>
            <person name="Fuchs M."/>
            <person name="Fartmann B."/>
            <person name="Granderath K."/>
            <person name="Dauner D."/>
            <person name="Herzl A."/>
            <person name="Neumann S."/>
            <person name="Argiriou A."/>
            <person name="Vitale D."/>
            <person name="Liguori R."/>
            <person name="Piravandi E."/>
            <person name="Massenet O."/>
            <person name="Quigley F."/>
            <person name="Clabauld G."/>
            <person name="Muendlein A."/>
            <person name="Felber R."/>
            <person name="Schnabl S."/>
            <person name="Hiller R."/>
            <person name="Schmidt W."/>
            <person name="Lecharny A."/>
            <person name="Aubourg S."/>
            <person name="Chefdor F."/>
            <person name="Cooke R."/>
            <person name="Berger C."/>
            <person name="Monfort A."/>
            <person name="Casacuberta E."/>
            <person name="Gibbons T."/>
            <person name="Weber N."/>
            <person name="Vandenbol M."/>
            <person name="Bargues M."/>
            <person name="Terol J."/>
            <person name="Torres A."/>
            <person name="Perez-Perez A."/>
            <person name="Purnelle B."/>
            <person name="Bent E."/>
            <person name="Johnson S."/>
            <person name="Tacon D."/>
            <person name="Jesse T."/>
            <person name="Heijnen L."/>
            <person name="Schwarz S."/>
            <person name="Scholler P."/>
            <person name="Heber S."/>
            <person name="Francs P."/>
            <person name="Bielke C."/>
            <person name="Frishman D."/>
            <person name="Haase D."/>
            <person name="Lemcke K."/>
            <person name="Mewes H.-W."/>
            <person name="Stocker S."/>
            <person name="Zaccaria P."/>
            <person name="Bevan M."/>
            <person name="Wilson R.K."/>
            <person name="de la Bastide M."/>
            <person name="Habermann K."/>
            <person name="Parnell L."/>
            <person name="Dedhia N."/>
            <person name="Gnoj L."/>
            <person name="Schutz K."/>
            <person name="Huang E."/>
            <person name="Spiegel L."/>
            <person name="Sekhon M."/>
            <person name="Murray J."/>
            <person name="Sheet P."/>
            <person name="Cordes M."/>
            <person name="Abu-Threideh J."/>
            <person name="Stoneking T."/>
            <person name="Kalicki J."/>
            <person name="Graves T."/>
            <person name="Harmon G."/>
            <person name="Edwards J."/>
            <person name="Latreille P."/>
            <person name="Courtney L."/>
            <person name="Cloud J."/>
            <person name="Abbott A."/>
            <person name="Scott K."/>
            <person name="Johnson D."/>
            <person name="Minx P."/>
            <person name="Bentley D."/>
            <person name="Fulton B."/>
            <person name="Miller N."/>
            <person name="Greco T."/>
            <person name="Kemp K."/>
            <person name="Kramer J."/>
            <person name="Fulton L."/>
            <person name="Mardis E."/>
            <person name="Dante M."/>
            <person name="Pepin K."/>
            <person name="Hillier L.W."/>
            <person name="Nelson J."/>
            <person name="Spieth J."/>
            <person name="Ryan E."/>
            <person name="Andrews S."/>
            <person name="Geisel C."/>
            <person name="Layman D."/>
            <person name="Du H."/>
            <person name="Ali J."/>
            <person name="Berghoff A."/>
            <person name="Jones K."/>
            <person name="Drone K."/>
            <person name="Cotton M."/>
            <person name="Joshu C."/>
            <person name="Antonoiu B."/>
            <person name="Zidanic M."/>
            <person name="Strong C."/>
            <person name="Sun H."/>
            <person name="Lamar B."/>
            <person name="Yordan C."/>
            <person name="Ma P."/>
            <person name="Zhong J."/>
            <person name="Preston R."/>
            <person name="Vil D."/>
            <person name="Shekher M."/>
            <person name="Matero A."/>
            <person name="Shah R."/>
            <person name="Swaby I.K."/>
            <person name="O'Shaughnessy A."/>
            <person name="Rodriguez M."/>
            <person name="Hoffman J."/>
            <person name="Till S."/>
            <person name="Granat S."/>
            <person name="Shohdy N."/>
            <person name="Hasegawa A."/>
            <person name="Hameed A."/>
            <person name="Lodhi M."/>
            <person name="Johnson A."/>
            <person name="Chen E."/>
            <person name="Marra M.A."/>
            <person name="Martienssen R."/>
            <person name="McCombie W.R."/>
        </authorList>
    </citation>
    <scope>NUCLEOTIDE SEQUENCE [LARGE SCALE GENOMIC DNA]</scope>
    <source>
        <strain>cv. Columbia</strain>
    </source>
</reference>
<reference key="2">
    <citation type="journal article" date="2017" name="Plant J.">
        <title>Araport11: a complete reannotation of the Arabidopsis thaliana reference genome.</title>
        <authorList>
            <person name="Cheng C.Y."/>
            <person name="Krishnakumar V."/>
            <person name="Chan A.P."/>
            <person name="Thibaud-Nissen F."/>
            <person name="Schobel S."/>
            <person name="Town C.D."/>
        </authorList>
    </citation>
    <scope>GENOME REANNOTATION</scope>
    <source>
        <strain>cv. Columbia</strain>
    </source>
</reference>
<reference key="3">
    <citation type="journal article" date="2003" name="Science">
        <title>Empirical analysis of transcriptional activity in the Arabidopsis genome.</title>
        <authorList>
            <person name="Yamada K."/>
            <person name="Lim J."/>
            <person name="Dale J.M."/>
            <person name="Chen H."/>
            <person name="Shinn P."/>
            <person name="Palm C.J."/>
            <person name="Southwick A.M."/>
            <person name="Wu H.C."/>
            <person name="Kim C.J."/>
            <person name="Nguyen M."/>
            <person name="Pham P.K."/>
            <person name="Cheuk R.F."/>
            <person name="Karlin-Newmann G."/>
            <person name="Liu S.X."/>
            <person name="Lam B."/>
            <person name="Sakano H."/>
            <person name="Wu T."/>
            <person name="Yu G."/>
            <person name="Miranda M."/>
            <person name="Quach H.L."/>
            <person name="Tripp M."/>
            <person name="Chang C.H."/>
            <person name="Lee J.M."/>
            <person name="Toriumi M.J."/>
            <person name="Chan M.M."/>
            <person name="Tang C.C."/>
            <person name="Onodera C.S."/>
            <person name="Deng J.M."/>
            <person name="Akiyama K."/>
            <person name="Ansari Y."/>
            <person name="Arakawa T."/>
            <person name="Banh J."/>
            <person name="Banno F."/>
            <person name="Bowser L."/>
            <person name="Brooks S.Y."/>
            <person name="Carninci P."/>
            <person name="Chao Q."/>
            <person name="Choy N."/>
            <person name="Enju A."/>
            <person name="Goldsmith A.D."/>
            <person name="Gurjal M."/>
            <person name="Hansen N.F."/>
            <person name="Hayashizaki Y."/>
            <person name="Johnson-Hopson C."/>
            <person name="Hsuan V.W."/>
            <person name="Iida K."/>
            <person name="Karnes M."/>
            <person name="Khan S."/>
            <person name="Koesema E."/>
            <person name="Ishida J."/>
            <person name="Jiang P.X."/>
            <person name="Jones T."/>
            <person name="Kawai J."/>
            <person name="Kamiya A."/>
            <person name="Meyers C."/>
            <person name="Nakajima M."/>
            <person name="Narusaka M."/>
            <person name="Seki M."/>
            <person name="Sakurai T."/>
            <person name="Satou M."/>
            <person name="Tamse R."/>
            <person name="Vaysberg M."/>
            <person name="Wallender E.K."/>
            <person name="Wong C."/>
            <person name="Yamamura Y."/>
            <person name="Yuan S."/>
            <person name="Shinozaki K."/>
            <person name="Davis R.W."/>
            <person name="Theologis A."/>
            <person name="Ecker J.R."/>
        </authorList>
    </citation>
    <scope>NUCLEOTIDE SEQUENCE [LARGE SCALE MRNA] (ISOFORM 2)</scope>
    <source>
        <strain>cv. Columbia</strain>
    </source>
</reference>
<reference key="4">
    <citation type="journal article" date="2006" name="Plant Mol. Biol.">
        <title>Identification and characterization of PiORP1, a Petunia oxysterol-binding-protein related protein involved in receptor-kinase mediated signaling in pollen, and analysis of the ORP gene family in Arabidopsis.</title>
        <authorList>
            <person name="Skirpan A.L."/>
            <person name="Dowd P.E."/>
            <person name="Sijacic P."/>
            <person name="Jaworski C.J."/>
            <person name="Gilroy S."/>
            <person name="Kao T.H."/>
        </authorList>
    </citation>
    <scope>TISSUE SPECIFICITY</scope>
    <scope>GENE FAMILY</scope>
    <scope>NOMENCLATURE</scope>
</reference>
<keyword id="KW-0025">Alternative splicing</keyword>
<keyword id="KW-0175">Coiled coil</keyword>
<keyword id="KW-0445">Lipid transport</keyword>
<keyword id="KW-0446">Lipid-binding</keyword>
<keyword id="KW-1185">Reference proteome</keyword>
<keyword id="KW-0813">Transport</keyword>
<comment type="function">
    <text evidence="1">May be involved in the transport of sterols.</text>
</comment>
<comment type="alternative products">
    <event type="alternative splicing"/>
    <isoform>
        <id>Q9SU36-1</id>
        <name>1</name>
        <sequence type="displayed"/>
    </isoform>
    <isoform>
        <id>Q9SU36-2</id>
        <name>2</name>
        <sequence type="described" ref="VSP_040250 VSP_040251"/>
    </isoform>
</comment>
<comment type="tissue specificity">
    <text evidence="5">Expressed in roots, leaves, stems and flowers.</text>
</comment>
<comment type="similarity">
    <text evidence="7">Belongs to the OSBP family.</text>
</comment>
<comment type="sequence caution" evidence="7">
    <conflict type="erroneous gene model prediction">
        <sequence resource="EMBL-CDS" id="CAB41716"/>
    </conflict>
</comment>
<comment type="sequence caution" evidence="7">
    <conflict type="erroneous gene model prediction">
        <sequence resource="EMBL-CDS" id="CAB78289"/>
    </conflict>
</comment>
<feature type="chain" id="PRO_0000402161" description="Oxysterol-binding protein-related protein 2B">
    <location>
        <begin position="1"/>
        <end position="693"/>
    </location>
</feature>
<feature type="domain" description="PH" evidence="3">
    <location>
        <begin position="25"/>
        <end position="154"/>
    </location>
</feature>
<feature type="region of interest" description="Disordered" evidence="4">
    <location>
        <begin position="1"/>
        <end position="22"/>
    </location>
</feature>
<feature type="region of interest" description="Disordered" evidence="4">
    <location>
        <begin position="256"/>
        <end position="298"/>
    </location>
</feature>
<feature type="region of interest" description="Disordered" evidence="4">
    <location>
        <begin position="600"/>
        <end position="639"/>
    </location>
</feature>
<feature type="coiled-coil region" evidence="2">
    <location>
        <begin position="207"/>
        <end position="239"/>
    </location>
</feature>
<feature type="coiled-coil region" evidence="2">
    <location>
        <begin position="612"/>
        <end position="643"/>
    </location>
</feature>
<feature type="compositionally biased region" description="Polar residues" evidence="4">
    <location>
        <begin position="1"/>
        <end position="15"/>
    </location>
</feature>
<feature type="compositionally biased region" description="Acidic residues" evidence="4">
    <location>
        <begin position="274"/>
        <end position="284"/>
    </location>
</feature>
<feature type="compositionally biased region" description="Basic and acidic residues" evidence="4">
    <location>
        <begin position="285"/>
        <end position="294"/>
    </location>
</feature>
<feature type="compositionally biased region" description="Basic and acidic residues" evidence="4">
    <location>
        <begin position="600"/>
        <end position="635"/>
    </location>
</feature>
<feature type="splice variant" id="VSP_040250" description="In isoform 2." evidence="6">
    <location>
        <begin position="1"/>
        <end position="326"/>
    </location>
</feature>
<feature type="splice variant" id="VSP_040251" description="In isoform 2." evidence="6">
    <location>
        <begin position="600"/>
        <end position="601"/>
    </location>
</feature>
<name>ORP2B_ARATH</name>
<organism>
    <name type="scientific">Arabidopsis thaliana</name>
    <name type="common">Mouse-ear cress</name>
    <dbReference type="NCBI Taxonomy" id="3702"/>
    <lineage>
        <taxon>Eukaryota</taxon>
        <taxon>Viridiplantae</taxon>
        <taxon>Streptophyta</taxon>
        <taxon>Embryophyta</taxon>
        <taxon>Tracheophyta</taxon>
        <taxon>Spermatophyta</taxon>
        <taxon>Magnoliopsida</taxon>
        <taxon>eudicotyledons</taxon>
        <taxon>Gunneridae</taxon>
        <taxon>Pentapetalae</taxon>
        <taxon>rosids</taxon>
        <taxon>malvids</taxon>
        <taxon>Brassicales</taxon>
        <taxon>Brassicaceae</taxon>
        <taxon>Camelineae</taxon>
        <taxon>Arabidopsis</taxon>
    </lineage>
</organism>
<accession>Q9SU36</accession>
<accession>Q8L711</accession>
<proteinExistence type="evidence at transcript level"/>
<evidence type="ECO:0000250" key="1"/>
<evidence type="ECO:0000255" key="2"/>
<evidence type="ECO:0000255" key="3">
    <source>
        <dbReference type="PROSITE-ProRule" id="PRU00145"/>
    </source>
</evidence>
<evidence type="ECO:0000256" key="4">
    <source>
        <dbReference type="SAM" id="MobiDB-lite"/>
    </source>
</evidence>
<evidence type="ECO:0000269" key="5">
    <source>
    </source>
</evidence>
<evidence type="ECO:0000303" key="6">
    <source>
    </source>
</evidence>
<evidence type="ECO:0000305" key="7"/>
<protein>
    <recommendedName>
        <fullName>Oxysterol-binding protein-related protein 2B</fullName>
    </recommendedName>
    <alternativeName>
        <fullName>OSBP-related protein 2B</fullName>
    </alternativeName>
</protein>
<sequence length="693" mass="79566">MPLTRSKSLPATENGGSDRETLQSGRSVAGILYKWTNYGKGWRSRWFLLRDGILSYSKIRRPENVNLLSPSDDLRLIGDISTDRLLRMKSCSGRSRRKHHKNIGIVHLKVSSYRESKSDHRKFYIFTATKTLHLRTDSRSDRAAWLQALASTRGIVPLQSINGDFSFVSPKDLSISTERLKKRLFEEGMNESLVKECEQIVDSEFCEVQEQIKLLHEERKKLLDALRQLEMANLEAEASGIHDDVYQLRNHKYSSLGRGKYSECSTSASSDDKQEFEDISEEDEASFHDTKESFGEPDVGSVLTHFKRRTKLPDPAEKERGVSLWSMIKDNVGKDLTRVCLPVYFNEPISSLQKCFEDLEYSYLLDQAYEYGKSGKSLLRALNVAAFAVSGYASTEGRHCKPFNPLLGETYEADFPEKGIRFFSEKVSHHPTVIACHCEGKGWKFWGDTNLRSKFWGRSIQLEPVGILTLEFDDGEIFQWSKVTTTIYNILLGKLYCDHHGIMKIRGNRQYSCMLKFKEQSILDRNPHQVNGFVEDVTGKKAATVFGKWNDSLYYVAGDGINKASASLLWKATKAPPNVTRYNFTSFAMTLNELIPGLEEKLPPTDSRLRPDQRHLENGEYEKANEEKQRLERRQRMSRQIQESGWRPRWFEPQGESESYKYTGGYWEARDVKSWDDCPNIFGEFTEEVADCA</sequence>
<dbReference type="EMBL" id="AL049730">
    <property type="protein sequence ID" value="CAB41716.1"/>
    <property type="status" value="ALT_SEQ"/>
    <property type="molecule type" value="Genomic_DNA"/>
</dbReference>
<dbReference type="EMBL" id="AL161534">
    <property type="protein sequence ID" value="CAB78289.1"/>
    <property type="status" value="ALT_SEQ"/>
    <property type="molecule type" value="Genomic_DNA"/>
</dbReference>
<dbReference type="EMBL" id="CP002687">
    <property type="protein sequence ID" value="AEE83135.1"/>
    <property type="molecule type" value="Genomic_DNA"/>
</dbReference>
<dbReference type="EMBL" id="CP002687">
    <property type="protein sequence ID" value="AEE83136.1"/>
    <property type="molecule type" value="Genomic_DNA"/>
</dbReference>
<dbReference type="EMBL" id="CP002687">
    <property type="protein sequence ID" value="ANM66036.1"/>
    <property type="molecule type" value="Genomic_DNA"/>
</dbReference>
<dbReference type="EMBL" id="AY140023">
    <property type="protein sequence ID" value="AAM98164.1"/>
    <property type="molecule type" value="mRNA"/>
</dbReference>
<dbReference type="EMBL" id="BT008852">
    <property type="protein sequence ID" value="AAP68291.1"/>
    <property type="molecule type" value="mRNA"/>
</dbReference>
<dbReference type="PIR" id="T07638">
    <property type="entry name" value="T07638"/>
</dbReference>
<dbReference type="RefSeq" id="NP_001078376.1">
    <molecule id="Q9SU36-2"/>
    <property type="nucleotide sequence ID" value="NM_001084907.1"/>
</dbReference>
<dbReference type="RefSeq" id="NP_001327962.1">
    <molecule id="Q9SU36-1"/>
    <property type="nucleotide sequence ID" value="NM_001340780.1"/>
</dbReference>
<dbReference type="RefSeq" id="NP_001327968.1">
    <property type="nucleotide sequence ID" value="NM_001340779.1"/>
</dbReference>
<dbReference type="RefSeq" id="NP_192983.2">
    <molecule id="Q9SU36-1"/>
    <property type="nucleotide sequence ID" value="NM_117316.3"/>
</dbReference>
<dbReference type="SMR" id="Q9SU36"/>
<dbReference type="BioGRID" id="12156">
    <property type="interactions" value="1"/>
</dbReference>
<dbReference type="FunCoup" id="Q9SU36">
    <property type="interactions" value="2757"/>
</dbReference>
<dbReference type="IntAct" id="Q9SU36">
    <property type="interactions" value="1"/>
</dbReference>
<dbReference type="STRING" id="3702.Q9SU36"/>
<dbReference type="iPTMnet" id="Q9SU36"/>
<dbReference type="PaxDb" id="3702-AT4G12460.1"/>
<dbReference type="ProteomicsDB" id="248906">
    <molecule id="Q9SU36-1"/>
</dbReference>
<dbReference type="EnsemblPlants" id="AT4G12460.1">
    <molecule id="Q9SU36-1"/>
    <property type="protein sequence ID" value="AT4G12460.1"/>
    <property type="gene ID" value="AT4G12460"/>
</dbReference>
<dbReference type="EnsemblPlants" id="AT4G12460.2">
    <molecule id="Q9SU36-2"/>
    <property type="protein sequence ID" value="AT4G12460.2"/>
    <property type="gene ID" value="AT4G12460"/>
</dbReference>
<dbReference type="EnsemblPlants" id="AT4G12460.8">
    <molecule id="Q9SU36-1"/>
    <property type="protein sequence ID" value="AT4G12460.8"/>
    <property type="gene ID" value="AT4G12460"/>
</dbReference>
<dbReference type="GeneID" id="826858"/>
<dbReference type="Gramene" id="AT4G12460.1">
    <molecule id="Q9SU36-1"/>
    <property type="protein sequence ID" value="AT4G12460.1"/>
    <property type="gene ID" value="AT4G12460"/>
</dbReference>
<dbReference type="Gramene" id="AT4G12460.2">
    <molecule id="Q9SU36-2"/>
    <property type="protein sequence ID" value="AT4G12460.2"/>
    <property type="gene ID" value="AT4G12460"/>
</dbReference>
<dbReference type="Gramene" id="AT4G12460.8">
    <molecule id="Q9SU36-1"/>
    <property type="protein sequence ID" value="AT4G12460.8"/>
    <property type="gene ID" value="AT4G12460"/>
</dbReference>
<dbReference type="KEGG" id="ath:AT4G12460"/>
<dbReference type="Araport" id="AT4G12460"/>
<dbReference type="TAIR" id="AT4G12460">
    <property type="gene designation" value="ORP2B"/>
</dbReference>
<dbReference type="eggNOG" id="KOG1737">
    <property type="taxonomic scope" value="Eukaryota"/>
</dbReference>
<dbReference type="HOGENOM" id="CLU_007105_0_1_1"/>
<dbReference type="InParanoid" id="Q9SU36"/>
<dbReference type="PhylomeDB" id="Q9SU36"/>
<dbReference type="PRO" id="PR:Q9SU36"/>
<dbReference type="Proteomes" id="UP000006548">
    <property type="component" value="Chromosome 4"/>
</dbReference>
<dbReference type="ExpressionAtlas" id="Q9SU36">
    <property type="expression patterns" value="baseline and differential"/>
</dbReference>
<dbReference type="GO" id="GO:0008289">
    <property type="term" value="F:lipid binding"/>
    <property type="evidence" value="ECO:0007669"/>
    <property type="project" value="UniProtKB-KW"/>
</dbReference>
<dbReference type="GO" id="GO:0006869">
    <property type="term" value="P:lipid transport"/>
    <property type="evidence" value="ECO:0007669"/>
    <property type="project" value="UniProtKB-KW"/>
</dbReference>
<dbReference type="FunFam" id="2.40.160.120:FF:000012">
    <property type="entry name" value="Oxysterol-binding protein-related protein 2A"/>
    <property type="match status" value="1"/>
</dbReference>
<dbReference type="FunFam" id="3.30.70.3490:FF:000013">
    <property type="entry name" value="Oxysterol-binding protein-related protein 2A"/>
    <property type="match status" value="1"/>
</dbReference>
<dbReference type="Gene3D" id="2.40.160.120">
    <property type="match status" value="1"/>
</dbReference>
<dbReference type="Gene3D" id="3.30.70.3490">
    <property type="match status" value="1"/>
</dbReference>
<dbReference type="Gene3D" id="2.30.29.30">
    <property type="entry name" value="Pleckstrin-homology domain (PH domain)/Phosphotyrosine-binding domain (PTB)"/>
    <property type="match status" value="1"/>
</dbReference>
<dbReference type="InterPro" id="IPR037239">
    <property type="entry name" value="OSBP_sf"/>
</dbReference>
<dbReference type="InterPro" id="IPR000648">
    <property type="entry name" value="Oxysterol-bd"/>
</dbReference>
<dbReference type="InterPro" id="IPR011993">
    <property type="entry name" value="PH-like_dom_sf"/>
</dbReference>
<dbReference type="InterPro" id="IPR001849">
    <property type="entry name" value="PH_domain"/>
</dbReference>
<dbReference type="PANTHER" id="PTHR10972">
    <property type="entry name" value="OXYSTEROL-BINDING PROTEIN-RELATED"/>
    <property type="match status" value="1"/>
</dbReference>
<dbReference type="PANTHER" id="PTHR10972:SF88">
    <property type="entry name" value="OXYSTEROL-BINDING PROTEIN-RELATED PROTEIN 2B"/>
    <property type="match status" value="1"/>
</dbReference>
<dbReference type="Pfam" id="PF01237">
    <property type="entry name" value="Oxysterol_BP"/>
    <property type="match status" value="1"/>
</dbReference>
<dbReference type="Pfam" id="PF15413">
    <property type="entry name" value="PH_11"/>
    <property type="match status" value="1"/>
</dbReference>
<dbReference type="SMART" id="SM00233">
    <property type="entry name" value="PH"/>
    <property type="match status" value="1"/>
</dbReference>
<dbReference type="SUPFAM" id="SSF144000">
    <property type="entry name" value="Oxysterol-binding protein-like"/>
    <property type="match status" value="1"/>
</dbReference>
<dbReference type="SUPFAM" id="SSF50729">
    <property type="entry name" value="PH domain-like"/>
    <property type="match status" value="1"/>
</dbReference>
<dbReference type="PROSITE" id="PS50003">
    <property type="entry name" value="PH_DOMAIN"/>
    <property type="match status" value="1"/>
</dbReference>